<reference key="1">
    <citation type="journal article" date="2007" name="PLoS Genet.">
        <title>Patterns and implications of gene gain and loss in the evolution of Prochlorococcus.</title>
        <authorList>
            <person name="Kettler G.C."/>
            <person name="Martiny A.C."/>
            <person name="Huang K."/>
            <person name="Zucker J."/>
            <person name="Coleman M.L."/>
            <person name="Rodrigue S."/>
            <person name="Chen F."/>
            <person name="Lapidus A."/>
            <person name="Ferriera S."/>
            <person name="Johnson J."/>
            <person name="Steglich C."/>
            <person name="Church G.M."/>
            <person name="Richardson P."/>
            <person name="Chisholm S.W."/>
        </authorList>
    </citation>
    <scope>NUCLEOTIDE SEQUENCE [LARGE SCALE GENOMIC DNA]</scope>
    <source>
        <strain>AS9601</strain>
    </source>
</reference>
<name>URE2_PROMS</name>
<dbReference type="EC" id="3.5.1.5" evidence="1"/>
<dbReference type="EMBL" id="CP000551">
    <property type="protein sequence ID" value="ABM70178.1"/>
    <property type="molecule type" value="Genomic_DNA"/>
</dbReference>
<dbReference type="RefSeq" id="WP_011818335.1">
    <property type="nucleotide sequence ID" value="NC_008816.1"/>
</dbReference>
<dbReference type="SMR" id="A2BQW7"/>
<dbReference type="STRING" id="146891.A9601_08941"/>
<dbReference type="KEGG" id="pmb:A9601_08941"/>
<dbReference type="eggNOG" id="COG0832">
    <property type="taxonomic scope" value="Bacteria"/>
</dbReference>
<dbReference type="HOGENOM" id="CLU_129707_1_1_3"/>
<dbReference type="OrthoDB" id="9797217at2"/>
<dbReference type="UniPathway" id="UPA00258">
    <property type="reaction ID" value="UER00370"/>
</dbReference>
<dbReference type="Proteomes" id="UP000002590">
    <property type="component" value="Chromosome"/>
</dbReference>
<dbReference type="GO" id="GO:0035550">
    <property type="term" value="C:urease complex"/>
    <property type="evidence" value="ECO:0007669"/>
    <property type="project" value="InterPro"/>
</dbReference>
<dbReference type="GO" id="GO:0009039">
    <property type="term" value="F:urease activity"/>
    <property type="evidence" value="ECO:0007669"/>
    <property type="project" value="UniProtKB-UniRule"/>
</dbReference>
<dbReference type="GO" id="GO:0043419">
    <property type="term" value="P:urea catabolic process"/>
    <property type="evidence" value="ECO:0007669"/>
    <property type="project" value="UniProtKB-UniRule"/>
</dbReference>
<dbReference type="CDD" id="cd00407">
    <property type="entry name" value="Urease_beta"/>
    <property type="match status" value="1"/>
</dbReference>
<dbReference type="FunFam" id="2.10.150.10:FF:000001">
    <property type="entry name" value="Urease subunit beta"/>
    <property type="match status" value="1"/>
</dbReference>
<dbReference type="Gene3D" id="2.10.150.10">
    <property type="entry name" value="Urease, beta subunit"/>
    <property type="match status" value="1"/>
</dbReference>
<dbReference type="HAMAP" id="MF_01954">
    <property type="entry name" value="Urease_beta"/>
    <property type="match status" value="1"/>
</dbReference>
<dbReference type="InterPro" id="IPR002019">
    <property type="entry name" value="Urease_beta-like"/>
</dbReference>
<dbReference type="InterPro" id="IPR036461">
    <property type="entry name" value="Urease_betasu_sf"/>
</dbReference>
<dbReference type="InterPro" id="IPR050069">
    <property type="entry name" value="Urease_subunit"/>
</dbReference>
<dbReference type="NCBIfam" id="NF009682">
    <property type="entry name" value="PRK13203.1"/>
    <property type="match status" value="1"/>
</dbReference>
<dbReference type="NCBIfam" id="TIGR00192">
    <property type="entry name" value="urease_beta"/>
    <property type="match status" value="1"/>
</dbReference>
<dbReference type="PANTHER" id="PTHR33569">
    <property type="entry name" value="UREASE"/>
    <property type="match status" value="1"/>
</dbReference>
<dbReference type="PANTHER" id="PTHR33569:SF1">
    <property type="entry name" value="UREASE"/>
    <property type="match status" value="1"/>
</dbReference>
<dbReference type="Pfam" id="PF00699">
    <property type="entry name" value="Urease_beta"/>
    <property type="match status" value="1"/>
</dbReference>
<dbReference type="SUPFAM" id="SSF51278">
    <property type="entry name" value="Urease, beta-subunit"/>
    <property type="match status" value="1"/>
</dbReference>
<proteinExistence type="inferred from homology"/>
<organism>
    <name type="scientific">Prochlorococcus marinus (strain AS9601)</name>
    <dbReference type="NCBI Taxonomy" id="146891"/>
    <lineage>
        <taxon>Bacteria</taxon>
        <taxon>Bacillati</taxon>
        <taxon>Cyanobacteriota</taxon>
        <taxon>Cyanophyceae</taxon>
        <taxon>Synechococcales</taxon>
        <taxon>Prochlorococcaceae</taxon>
        <taxon>Prochlorococcus</taxon>
    </lineage>
</organism>
<evidence type="ECO:0000255" key="1">
    <source>
        <dbReference type="HAMAP-Rule" id="MF_01954"/>
    </source>
</evidence>
<comment type="catalytic activity">
    <reaction evidence="1">
        <text>urea + 2 H2O + H(+) = hydrogencarbonate + 2 NH4(+)</text>
        <dbReference type="Rhea" id="RHEA:20557"/>
        <dbReference type="ChEBI" id="CHEBI:15377"/>
        <dbReference type="ChEBI" id="CHEBI:15378"/>
        <dbReference type="ChEBI" id="CHEBI:16199"/>
        <dbReference type="ChEBI" id="CHEBI:17544"/>
        <dbReference type="ChEBI" id="CHEBI:28938"/>
        <dbReference type="EC" id="3.5.1.5"/>
    </reaction>
</comment>
<comment type="pathway">
    <text evidence="1">Nitrogen metabolism; urea degradation; CO(2) and NH(3) from urea (urease route): step 1/1.</text>
</comment>
<comment type="subunit">
    <text evidence="1">Heterotrimer of UreA (gamma), UreB (beta) and UreC (alpha) subunits. Three heterotrimers associate to form the active enzyme.</text>
</comment>
<comment type="subcellular location">
    <subcellularLocation>
        <location evidence="1">Cytoplasm</location>
    </subcellularLocation>
</comment>
<comment type="similarity">
    <text evidence="1">Belongs to the urease beta subunit family.</text>
</comment>
<accession>A2BQW7</accession>
<sequence length="106" mass="11628">MSNLIPGEIIPEQGQIELNLSKQVKTVTVSNSGDRPVQVGSHYHFYEANKALIFDREITYGMRLDIPAGTAIRFEPGDTTDVKLVPFSGLRNAYGFNSLVNGSLNS</sequence>
<feature type="chain" id="PRO_1000070757" description="Urease subunit beta">
    <location>
        <begin position="1"/>
        <end position="106"/>
    </location>
</feature>
<keyword id="KW-0963">Cytoplasm</keyword>
<keyword id="KW-0378">Hydrolase</keyword>
<protein>
    <recommendedName>
        <fullName evidence="1">Urease subunit beta</fullName>
        <ecNumber evidence="1">3.5.1.5</ecNumber>
    </recommendedName>
    <alternativeName>
        <fullName evidence="1">Urea amidohydrolase subunit beta</fullName>
    </alternativeName>
</protein>
<gene>
    <name evidence="1" type="primary">ureB</name>
    <name type="ordered locus">A9601_08941</name>
</gene>